<organism>
    <name type="scientific">Shewanella baltica (strain OS195)</name>
    <dbReference type="NCBI Taxonomy" id="399599"/>
    <lineage>
        <taxon>Bacteria</taxon>
        <taxon>Pseudomonadati</taxon>
        <taxon>Pseudomonadota</taxon>
        <taxon>Gammaproteobacteria</taxon>
        <taxon>Alteromonadales</taxon>
        <taxon>Shewanellaceae</taxon>
        <taxon>Shewanella</taxon>
    </lineage>
</organism>
<proteinExistence type="inferred from homology"/>
<evidence type="ECO:0000255" key="1">
    <source>
        <dbReference type="HAMAP-Rule" id="MF_00575"/>
    </source>
</evidence>
<sequence length="240" mass="27092">MRTLFIGDLHLSADRLDITQAFTRFLDTELDDADALYILGDLFEVWVGDDIALPFALELAEKLKQVSQKLPVYFIHGNRDFMLGKQFARAAGMQILPEVTCLNLYGIETVILHGDSLCTLDKAYQRFRKLRSLSLARWLYGCLSKKTRQGIADKIRSNSKSSNQQKSYTIMDVEPNAVDALFAKTHTKHMIHGHTHRPAIHQLANGCQRIVVGDWYEQGSVLSVSAEGINLQSLPFEHTT</sequence>
<dbReference type="EC" id="3.6.1.54" evidence="1"/>
<dbReference type="EMBL" id="CP000891">
    <property type="protein sequence ID" value="ABX48795.1"/>
    <property type="molecule type" value="Genomic_DNA"/>
</dbReference>
<dbReference type="RefSeq" id="WP_006085362.1">
    <property type="nucleotide sequence ID" value="NC_009997.1"/>
</dbReference>
<dbReference type="SMR" id="A9KWH2"/>
<dbReference type="KEGG" id="sbn:Sbal195_1622"/>
<dbReference type="HOGENOM" id="CLU_074586_0_0_6"/>
<dbReference type="UniPathway" id="UPA00359">
    <property type="reaction ID" value="UER00480"/>
</dbReference>
<dbReference type="Proteomes" id="UP000000770">
    <property type="component" value="Chromosome"/>
</dbReference>
<dbReference type="GO" id="GO:0005737">
    <property type="term" value="C:cytoplasm"/>
    <property type="evidence" value="ECO:0007669"/>
    <property type="project" value="InterPro"/>
</dbReference>
<dbReference type="GO" id="GO:0019897">
    <property type="term" value="C:extrinsic component of plasma membrane"/>
    <property type="evidence" value="ECO:0007669"/>
    <property type="project" value="UniProtKB-UniRule"/>
</dbReference>
<dbReference type="GO" id="GO:0030145">
    <property type="term" value="F:manganese ion binding"/>
    <property type="evidence" value="ECO:0007669"/>
    <property type="project" value="UniProtKB-UniRule"/>
</dbReference>
<dbReference type="GO" id="GO:0008758">
    <property type="term" value="F:UDP-2,3-diacylglucosamine hydrolase activity"/>
    <property type="evidence" value="ECO:0007669"/>
    <property type="project" value="UniProtKB-UniRule"/>
</dbReference>
<dbReference type="GO" id="GO:0009245">
    <property type="term" value="P:lipid A biosynthetic process"/>
    <property type="evidence" value="ECO:0007669"/>
    <property type="project" value="UniProtKB-UniRule"/>
</dbReference>
<dbReference type="CDD" id="cd07398">
    <property type="entry name" value="MPP_YbbF-LpxH"/>
    <property type="match status" value="1"/>
</dbReference>
<dbReference type="Gene3D" id="3.60.21.10">
    <property type="match status" value="1"/>
</dbReference>
<dbReference type="HAMAP" id="MF_00575">
    <property type="entry name" value="LpxH"/>
    <property type="match status" value="1"/>
</dbReference>
<dbReference type="InterPro" id="IPR004843">
    <property type="entry name" value="Calcineurin-like_PHP_ApaH"/>
</dbReference>
<dbReference type="InterPro" id="IPR043461">
    <property type="entry name" value="LpxH-like"/>
</dbReference>
<dbReference type="InterPro" id="IPR029052">
    <property type="entry name" value="Metallo-depent_PP-like"/>
</dbReference>
<dbReference type="InterPro" id="IPR010138">
    <property type="entry name" value="UDP-diacylglucosamine_Hdrlase"/>
</dbReference>
<dbReference type="NCBIfam" id="TIGR01854">
    <property type="entry name" value="lipid_A_lpxH"/>
    <property type="match status" value="1"/>
</dbReference>
<dbReference type="NCBIfam" id="NF003743">
    <property type="entry name" value="PRK05340.1"/>
    <property type="match status" value="1"/>
</dbReference>
<dbReference type="PANTHER" id="PTHR34990:SF1">
    <property type="entry name" value="UDP-2,3-DIACYLGLUCOSAMINE HYDROLASE"/>
    <property type="match status" value="1"/>
</dbReference>
<dbReference type="PANTHER" id="PTHR34990">
    <property type="entry name" value="UDP-2,3-DIACYLGLUCOSAMINE HYDROLASE-RELATED"/>
    <property type="match status" value="1"/>
</dbReference>
<dbReference type="Pfam" id="PF00149">
    <property type="entry name" value="Metallophos"/>
    <property type="match status" value="1"/>
</dbReference>
<dbReference type="SUPFAM" id="SSF56300">
    <property type="entry name" value="Metallo-dependent phosphatases"/>
    <property type="match status" value="1"/>
</dbReference>
<gene>
    <name evidence="1" type="primary">lpxH</name>
    <name type="ordered locus">Sbal195_1622</name>
</gene>
<protein>
    <recommendedName>
        <fullName evidence="1">UDP-2,3-diacylglucosamine hydrolase</fullName>
        <ecNumber evidence="1">3.6.1.54</ecNumber>
    </recommendedName>
    <alternativeName>
        <fullName evidence="1">UDP-2,3-diacylglucosamine diphosphatase</fullName>
    </alternativeName>
</protein>
<reference key="1">
    <citation type="submission" date="2007-11" db="EMBL/GenBank/DDBJ databases">
        <title>Complete sequence of chromosome of Shewanella baltica OS195.</title>
        <authorList>
            <consortium name="US DOE Joint Genome Institute"/>
            <person name="Copeland A."/>
            <person name="Lucas S."/>
            <person name="Lapidus A."/>
            <person name="Barry K."/>
            <person name="Glavina del Rio T."/>
            <person name="Dalin E."/>
            <person name="Tice H."/>
            <person name="Pitluck S."/>
            <person name="Chain P."/>
            <person name="Malfatti S."/>
            <person name="Shin M."/>
            <person name="Vergez L."/>
            <person name="Schmutz J."/>
            <person name="Larimer F."/>
            <person name="Land M."/>
            <person name="Hauser L."/>
            <person name="Kyrpides N."/>
            <person name="Kim E."/>
            <person name="Brettar I."/>
            <person name="Rodrigues J."/>
            <person name="Konstantinidis K."/>
            <person name="Klappenbach J."/>
            <person name="Hofle M."/>
            <person name="Tiedje J."/>
            <person name="Richardson P."/>
        </authorList>
    </citation>
    <scope>NUCLEOTIDE SEQUENCE [LARGE SCALE GENOMIC DNA]</scope>
    <source>
        <strain>OS195</strain>
    </source>
</reference>
<name>LPXH_SHEB9</name>
<feature type="chain" id="PRO_1000082341" description="UDP-2,3-diacylglucosamine hydrolase">
    <location>
        <begin position="1"/>
        <end position="240"/>
    </location>
</feature>
<feature type="binding site" evidence="1">
    <location>
        <position position="8"/>
    </location>
    <ligand>
        <name>Mn(2+)</name>
        <dbReference type="ChEBI" id="CHEBI:29035"/>
        <label>1</label>
    </ligand>
</feature>
<feature type="binding site" evidence="1">
    <location>
        <position position="10"/>
    </location>
    <ligand>
        <name>Mn(2+)</name>
        <dbReference type="ChEBI" id="CHEBI:29035"/>
        <label>1</label>
    </ligand>
</feature>
<feature type="binding site" evidence="1">
    <location>
        <position position="41"/>
    </location>
    <ligand>
        <name>Mn(2+)</name>
        <dbReference type="ChEBI" id="CHEBI:29035"/>
        <label>1</label>
    </ligand>
</feature>
<feature type="binding site" evidence="1">
    <location>
        <position position="41"/>
    </location>
    <ligand>
        <name>Mn(2+)</name>
        <dbReference type="ChEBI" id="CHEBI:29035"/>
        <label>2</label>
    </ligand>
</feature>
<feature type="binding site" evidence="1">
    <location>
        <begin position="78"/>
        <end position="79"/>
    </location>
    <ligand>
        <name>substrate</name>
    </ligand>
</feature>
<feature type="binding site" evidence="1">
    <location>
        <position position="78"/>
    </location>
    <ligand>
        <name>Mn(2+)</name>
        <dbReference type="ChEBI" id="CHEBI:29035"/>
        <label>2</label>
    </ligand>
</feature>
<feature type="binding site" evidence="1">
    <location>
        <position position="113"/>
    </location>
    <ligand>
        <name>Mn(2+)</name>
        <dbReference type="ChEBI" id="CHEBI:29035"/>
        <label>2</label>
    </ligand>
</feature>
<feature type="binding site" evidence="1">
    <location>
        <position position="121"/>
    </location>
    <ligand>
        <name>substrate</name>
    </ligand>
</feature>
<feature type="binding site" evidence="1">
    <location>
        <position position="159"/>
    </location>
    <ligand>
        <name>substrate</name>
    </ligand>
</feature>
<feature type="binding site" evidence="1">
    <location>
        <position position="163"/>
    </location>
    <ligand>
        <name>substrate</name>
    </ligand>
</feature>
<feature type="binding site" evidence="1">
    <location>
        <position position="166"/>
    </location>
    <ligand>
        <name>substrate</name>
    </ligand>
</feature>
<feature type="binding site" evidence="1">
    <location>
        <position position="194"/>
    </location>
    <ligand>
        <name>Mn(2+)</name>
        <dbReference type="ChEBI" id="CHEBI:29035"/>
        <label>2</label>
    </ligand>
</feature>
<feature type="binding site" evidence="1">
    <location>
        <position position="194"/>
    </location>
    <ligand>
        <name>substrate</name>
    </ligand>
</feature>
<feature type="binding site" evidence="1">
    <location>
        <position position="196"/>
    </location>
    <ligand>
        <name>Mn(2+)</name>
        <dbReference type="ChEBI" id="CHEBI:29035"/>
        <label>1</label>
    </ligand>
</feature>
<keyword id="KW-0997">Cell inner membrane</keyword>
<keyword id="KW-1003">Cell membrane</keyword>
<keyword id="KW-0378">Hydrolase</keyword>
<keyword id="KW-0441">Lipid A biosynthesis</keyword>
<keyword id="KW-0444">Lipid biosynthesis</keyword>
<keyword id="KW-0443">Lipid metabolism</keyword>
<keyword id="KW-0464">Manganese</keyword>
<keyword id="KW-0472">Membrane</keyword>
<keyword id="KW-0479">Metal-binding</keyword>
<accession>A9KWH2</accession>
<comment type="function">
    <text evidence="1">Hydrolyzes the pyrophosphate bond of UDP-2,3-diacylglucosamine to yield 2,3-diacylglucosamine 1-phosphate (lipid X) and UMP by catalyzing the attack of water at the alpha-P atom. Involved in the biosynthesis of lipid A, a phosphorylated glycolipid that anchors the lipopolysaccharide to the outer membrane of the cell.</text>
</comment>
<comment type="catalytic activity">
    <reaction evidence="1">
        <text>UDP-2-N,3-O-bis[(3R)-3-hydroxytetradecanoyl]-alpha-D-glucosamine + H2O = 2-N,3-O-bis[(3R)-3-hydroxytetradecanoyl]-alpha-D-glucosaminyl 1-phosphate + UMP + 2 H(+)</text>
        <dbReference type="Rhea" id="RHEA:25213"/>
        <dbReference type="ChEBI" id="CHEBI:15377"/>
        <dbReference type="ChEBI" id="CHEBI:15378"/>
        <dbReference type="ChEBI" id="CHEBI:57865"/>
        <dbReference type="ChEBI" id="CHEBI:57957"/>
        <dbReference type="ChEBI" id="CHEBI:78847"/>
        <dbReference type="EC" id="3.6.1.54"/>
    </reaction>
</comment>
<comment type="cofactor">
    <cofactor evidence="1">
        <name>Mn(2+)</name>
        <dbReference type="ChEBI" id="CHEBI:29035"/>
    </cofactor>
    <text evidence="1">Binds 2 Mn(2+) ions per subunit in a binuclear metal center.</text>
</comment>
<comment type="pathway">
    <text evidence="1">Glycolipid biosynthesis; lipid IV(A) biosynthesis; lipid IV(A) from (3R)-3-hydroxytetradecanoyl-[acyl-carrier-protein] and UDP-N-acetyl-alpha-D-glucosamine: step 4/6.</text>
</comment>
<comment type="subcellular location">
    <subcellularLocation>
        <location evidence="1">Cell inner membrane</location>
        <topology evidence="1">Peripheral membrane protein</topology>
        <orientation evidence="1">Cytoplasmic side</orientation>
    </subcellularLocation>
</comment>
<comment type="similarity">
    <text evidence="1">Belongs to the LpxH family.</text>
</comment>